<accession>Q5HHE6</accession>
<reference key="1">
    <citation type="journal article" date="2005" name="J. Bacteriol.">
        <title>Insights on evolution of virulence and resistance from the complete genome analysis of an early methicillin-resistant Staphylococcus aureus strain and a biofilm-producing methicillin-resistant Staphylococcus epidermidis strain.</title>
        <authorList>
            <person name="Gill S.R."/>
            <person name="Fouts D.E."/>
            <person name="Archer G.L."/>
            <person name="Mongodin E.F."/>
            <person name="DeBoy R.T."/>
            <person name="Ravel J."/>
            <person name="Paulsen I.T."/>
            <person name="Kolonay J.F."/>
            <person name="Brinkac L.M."/>
            <person name="Beanan M.J."/>
            <person name="Dodson R.J."/>
            <person name="Daugherty S.C."/>
            <person name="Madupu R."/>
            <person name="Angiuoli S.V."/>
            <person name="Durkin A.S."/>
            <person name="Haft D.H."/>
            <person name="Vamathevan J.J."/>
            <person name="Khouri H."/>
            <person name="Utterback T.R."/>
            <person name="Lee C."/>
            <person name="Dimitrov G."/>
            <person name="Jiang L."/>
            <person name="Qin H."/>
            <person name="Weidman J."/>
            <person name="Tran K."/>
            <person name="Kang K.H."/>
            <person name="Hance I.R."/>
            <person name="Nelson K.E."/>
            <person name="Fraser C.M."/>
        </authorList>
    </citation>
    <scope>NUCLEOTIDE SEQUENCE [LARGE SCALE GENOMIC DNA]</scope>
    <source>
        <strain>COL</strain>
    </source>
</reference>
<evidence type="ECO:0000255" key="1">
    <source>
        <dbReference type="HAMAP-Rule" id="MF_01542"/>
    </source>
</evidence>
<sequence>MNPIVEFCLSNMAKGGDYVFNQLENDPDVDVLEYGCLTHCGICSAGLYALVNGDIVEGDSPEELLQNIYAHIKETWIF</sequence>
<dbReference type="EMBL" id="CP000046">
    <property type="protein sequence ID" value="AAW37910.1"/>
    <property type="molecule type" value="Genomic_DNA"/>
</dbReference>
<dbReference type="RefSeq" id="WP_001068337.1">
    <property type="nucleotide sequence ID" value="NZ_JBGOFO010000002.1"/>
</dbReference>
<dbReference type="SMR" id="Q5HHE6"/>
<dbReference type="KEGG" id="sac:SACOL0942"/>
<dbReference type="HOGENOM" id="CLU_182025_0_0_9"/>
<dbReference type="Proteomes" id="UP000000530">
    <property type="component" value="Chromosome"/>
</dbReference>
<dbReference type="HAMAP" id="MF_01542">
    <property type="entry name" value="UPF0349"/>
    <property type="match status" value="1"/>
</dbReference>
<dbReference type="InterPro" id="IPR009910">
    <property type="entry name" value="DUF1450"/>
</dbReference>
<dbReference type="InterPro" id="IPR022916">
    <property type="entry name" value="UPF0349"/>
</dbReference>
<dbReference type="NCBIfam" id="NF010190">
    <property type="entry name" value="PRK13669.1"/>
    <property type="match status" value="1"/>
</dbReference>
<dbReference type="Pfam" id="PF07293">
    <property type="entry name" value="DUF1450"/>
    <property type="match status" value="1"/>
</dbReference>
<proteinExistence type="inferred from homology"/>
<feature type="chain" id="PRO_0000165894" description="UPF0349 protein SACOL0942">
    <location>
        <begin position="1"/>
        <end position="78"/>
    </location>
</feature>
<name>Y942_STAAC</name>
<organism>
    <name type="scientific">Staphylococcus aureus (strain COL)</name>
    <dbReference type="NCBI Taxonomy" id="93062"/>
    <lineage>
        <taxon>Bacteria</taxon>
        <taxon>Bacillati</taxon>
        <taxon>Bacillota</taxon>
        <taxon>Bacilli</taxon>
        <taxon>Bacillales</taxon>
        <taxon>Staphylococcaceae</taxon>
        <taxon>Staphylococcus</taxon>
    </lineage>
</organism>
<gene>
    <name type="ordered locus">SACOL0942</name>
</gene>
<protein>
    <recommendedName>
        <fullName evidence="1">UPF0349 protein SACOL0942</fullName>
    </recommendedName>
</protein>
<comment type="similarity">
    <text evidence="1">Belongs to the UPF0349 family.</text>
</comment>